<comment type="function">
    <text evidence="1">This protein is involved in the repair of mismatches in DNA. It is possible that it carries out the mismatch recognition step. This protein has a weak ATPase activity.</text>
</comment>
<comment type="similarity">
    <text evidence="1">Belongs to the DNA mismatch repair MutS family.</text>
</comment>
<evidence type="ECO:0000255" key="1">
    <source>
        <dbReference type="HAMAP-Rule" id="MF_00096"/>
    </source>
</evidence>
<feature type="chain" id="PRO_0000115127" description="DNA mismatch repair protein MutS">
    <location>
        <begin position="1"/>
        <end position="891"/>
    </location>
</feature>
<feature type="binding site" evidence="1">
    <location>
        <begin position="632"/>
        <end position="639"/>
    </location>
    <ligand>
        <name>ATP</name>
        <dbReference type="ChEBI" id="CHEBI:30616"/>
    </ligand>
</feature>
<proteinExistence type="inferred from homology"/>
<accession>Q7UP05</accession>
<protein>
    <recommendedName>
        <fullName evidence="1">DNA mismatch repair protein MutS</fullName>
    </recommendedName>
</protein>
<keyword id="KW-0067">ATP-binding</keyword>
<keyword id="KW-0227">DNA damage</keyword>
<keyword id="KW-0234">DNA repair</keyword>
<keyword id="KW-0238">DNA-binding</keyword>
<keyword id="KW-0547">Nucleotide-binding</keyword>
<keyword id="KW-1185">Reference proteome</keyword>
<organism>
    <name type="scientific">Rhodopirellula baltica (strain DSM 10527 / NCIMB 13988 / SH1)</name>
    <dbReference type="NCBI Taxonomy" id="243090"/>
    <lineage>
        <taxon>Bacteria</taxon>
        <taxon>Pseudomonadati</taxon>
        <taxon>Planctomycetota</taxon>
        <taxon>Planctomycetia</taxon>
        <taxon>Pirellulales</taxon>
        <taxon>Pirellulaceae</taxon>
        <taxon>Rhodopirellula</taxon>
    </lineage>
</organism>
<reference key="1">
    <citation type="journal article" date="2003" name="Proc. Natl. Acad. Sci. U.S.A.">
        <title>Complete genome sequence of the marine planctomycete Pirellula sp. strain 1.</title>
        <authorList>
            <person name="Gloeckner F.O."/>
            <person name="Kube M."/>
            <person name="Bauer M."/>
            <person name="Teeling H."/>
            <person name="Lombardot T."/>
            <person name="Ludwig W."/>
            <person name="Gade D."/>
            <person name="Beck A."/>
            <person name="Borzym K."/>
            <person name="Heitmann K."/>
            <person name="Rabus R."/>
            <person name="Schlesner H."/>
            <person name="Amann R."/>
            <person name="Reinhardt R."/>
        </authorList>
    </citation>
    <scope>NUCLEOTIDE SEQUENCE [LARGE SCALE GENOMIC DNA]</scope>
    <source>
        <strain>DSM 10527 / NCIMB 13988 / SH1</strain>
    </source>
</reference>
<gene>
    <name evidence="1" type="primary">mutS</name>
    <name type="ordered locus">RB7237</name>
</gene>
<dbReference type="EMBL" id="BX294145">
    <property type="protein sequence ID" value="CAD75260.1"/>
    <property type="molecule type" value="Genomic_DNA"/>
</dbReference>
<dbReference type="RefSeq" id="NP_867713.1">
    <property type="nucleotide sequence ID" value="NC_005027.1"/>
</dbReference>
<dbReference type="RefSeq" id="WP_011121304.1">
    <property type="nucleotide sequence ID" value="NC_005027.1"/>
</dbReference>
<dbReference type="SMR" id="Q7UP05"/>
<dbReference type="FunCoup" id="Q7UP05">
    <property type="interactions" value="443"/>
</dbReference>
<dbReference type="STRING" id="243090.RB7237"/>
<dbReference type="EnsemblBacteria" id="CAD75260">
    <property type="protein sequence ID" value="CAD75260"/>
    <property type="gene ID" value="RB7237"/>
</dbReference>
<dbReference type="KEGG" id="rba:RB7237"/>
<dbReference type="PATRIC" id="fig|243090.15.peg.3505"/>
<dbReference type="eggNOG" id="COG0249">
    <property type="taxonomic scope" value="Bacteria"/>
</dbReference>
<dbReference type="HOGENOM" id="CLU_002472_4_0_0"/>
<dbReference type="InParanoid" id="Q7UP05"/>
<dbReference type="OrthoDB" id="9802448at2"/>
<dbReference type="Proteomes" id="UP000001025">
    <property type="component" value="Chromosome"/>
</dbReference>
<dbReference type="GO" id="GO:0005829">
    <property type="term" value="C:cytosol"/>
    <property type="evidence" value="ECO:0000318"/>
    <property type="project" value="GO_Central"/>
</dbReference>
<dbReference type="GO" id="GO:0005524">
    <property type="term" value="F:ATP binding"/>
    <property type="evidence" value="ECO:0007669"/>
    <property type="project" value="UniProtKB-UniRule"/>
</dbReference>
<dbReference type="GO" id="GO:0140664">
    <property type="term" value="F:ATP-dependent DNA damage sensor activity"/>
    <property type="evidence" value="ECO:0007669"/>
    <property type="project" value="InterPro"/>
</dbReference>
<dbReference type="GO" id="GO:0003684">
    <property type="term" value="F:damaged DNA binding"/>
    <property type="evidence" value="ECO:0007669"/>
    <property type="project" value="UniProtKB-UniRule"/>
</dbReference>
<dbReference type="GO" id="GO:0030983">
    <property type="term" value="F:mismatched DNA binding"/>
    <property type="evidence" value="ECO:0000318"/>
    <property type="project" value="GO_Central"/>
</dbReference>
<dbReference type="GO" id="GO:0006298">
    <property type="term" value="P:mismatch repair"/>
    <property type="evidence" value="ECO:0000318"/>
    <property type="project" value="GO_Central"/>
</dbReference>
<dbReference type="CDD" id="cd03284">
    <property type="entry name" value="ABC_MutS1"/>
    <property type="match status" value="1"/>
</dbReference>
<dbReference type="FunFam" id="1.10.1420.10:FF:000002">
    <property type="entry name" value="DNA mismatch repair protein MutS"/>
    <property type="match status" value="1"/>
</dbReference>
<dbReference type="FunFam" id="3.40.1170.10:FF:000001">
    <property type="entry name" value="DNA mismatch repair protein MutS"/>
    <property type="match status" value="1"/>
</dbReference>
<dbReference type="FunFam" id="3.40.50.300:FF:000870">
    <property type="entry name" value="MutS protein homolog 4"/>
    <property type="match status" value="1"/>
</dbReference>
<dbReference type="Gene3D" id="1.10.1420.10">
    <property type="match status" value="2"/>
</dbReference>
<dbReference type="Gene3D" id="3.40.1170.10">
    <property type="entry name" value="DNA repair protein MutS, domain I"/>
    <property type="match status" value="1"/>
</dbReference>
<dbReference type="Gene3D" id="3.30.420.110">
    <property type="entry name" value="MutS, connector domain"/>
    <property type="match status" value="1"/>
</dbReference>
<dbReference type="Gene3D" id="3.40.50.300">
    <property type="entry name" value="P-loop containing nucleotide triphosphate hydrolases"/>
    <property type="match status" value="1"/>
</dbReference>
<dbReference type="HAMAP" id="MF_00096">
    <property type="entry name" value="MutS"/>
    <property type="match status" value="1"/>
</dbReference>
<dbReference type="InterPro" id="IPR005748">
    <property type="entry name" value="DNA_mismatch_repair_MutS"/>
</dbReference>
<dbReference type="InterPro" id="IPR007695">
    <property type="entry name" value="DNA_mismatch_repair_MutS-lik_N"/>
</dbReference>
<dbReference type="InterPro" id="IPR017261">
    <property type="entry name" value="DNA_mismatch_repair_MutS/MSH"/>
</dbReference>
<dbReference type="InterPro" id="IPR000432">
    <property type="entry name" value="DNA_mismatch_repair_MutS_C"/>
</dbReference>
<dbReference type="InterPro" id="IPR007861">
    <property type="entry name" value="DNA_mismatch_repair_MutS_clamp"/>
</dbReference>
<dbReference type="InterPro" id="IPR007696">
    <property type="entry name" value="DNA_mismatch_repair_MutS_core"/>
</dbReference>
<dbReference type="InterPro" id="IPR016151">
    <property type="entry name" value="DNA_mismatch_repair_MutS_N"/>
</dbReference>
<dbReference type="InterPro" id="IPR036187">
    <property type="entry name" value="DNA_mismatch_repair_MutS_sf"/>
</dbReference>
<dbReference type="InterPro" id="IPR007860">
    <property type="entry name" value="DNA_mmatch_repair_MutS_con_dom"/>
</dbReference>
<dbReference type="InterPro" id="IPR045076">
    <property type="entry name" value="MutS"/>
</dbReference>
<dbReference type="InterPro" id="IPR036678">
    <property type="entry name" value="MutS_con_dom_sf"/>
</dbReference>
<dbReference type="InterPro" id="IPR027417">
    <property type="entry name" value="P-loop_NTPase"/>
</dbReference>
<dbReference type="NCBIfam" id="TIGR01070">
    <property type="entry name" value="mutS1"/>
    <property type="match status" value="1"/>
</dbReference>
<dbReference type="NCBIfam" id="NF003810">
    <property type="entry name" value="PRK05399.1"/>
    <property type="match status" value="1"/>
</dbReference>
<dbReference type="PANTHER" id="PTHR11361:SF34">
    <property type="entry name" value="DNA MISMATCH REPAIR PROTEIN MSH1, MITOCHONDRIAL"/>
    <property type="match status" value="1"/>
</dbReference>
<dbReference type="PANTHER" id="PTHR11361">
    <property type="entry name" value="DNA MISMATCH REPAIR PROTEIN MUTS FAMILY MEMBER"/>
    <property type="match status" value="1"/>
</dbReference>
<dbReference type="Pfam" id="PF01624">
    <property type="entry name" value="MutS_I"/>
    <property type="match status" value="1"/>
</dbReference>
<dbReference type="Pfam" id="PF05188">
    <property type="entry name" value="MutS_II"/>
    <property type="match status" value="1"/>
</dbReference>
<dbReference type="Pfam" id="PF05192">
    <property type="entry name" value="MutS_III"/>
    <property type="match status" value="1"/>
</dbReference>
<dbReference type="Pfam" id="PF05190">
    <property type="entry name" value="MutS_IV"/>
    <property type="match status" value="1"/>
</dbReference>
<dbReference type="Pfam" id="PF00488">
    <property type="entry name" value="MutS_V"/>
    <property type="match status" value="1"/>
</dbReference>
<dbReference type="PIRSF" id="PIRSF037677">
    <property type="entry name" value="DNA_mis_repair_Msh6"/>
    <property type="match status" value="1"/>
</dbReference>
<dbReference type="SMART" id="SM00534">
    <property type="entry name" value="MUTSac"/>
    <property type="match status" value="1"/>
</dbReference>
<dbReference type="SMART" id="SM00533">
    <property type="entry name" value="MUTSd"/>
    <property type="match status" value="1"/>
</dbReference>
<dbReference type="SUPFAM" id="SSF55271">
    <property type="entry name" value="DNA repair protein MutS, domain I"/>
    <property type="match status" value="1"/>
</dbReference>
<dbReference type="SUPFAM" id="SSF53150">
    <property type="entry name" value="DNA repair protein MutS, domain II"/>
    <property type="match status" value="1"/>
</dbReference>
<dbReference type="SUPFAM" id="SSF48334">
    <property type="entry name" value="DNA repair protein MutS, domain III"/>
    <property type="match status" value="1"/>
</dbReference>
<dbReference type="SUPFAM" id="SSF52540">
    <property type="entry name" value="P-loop containing nucleoside triphosphate hydrolases"/>
    <property type="match status" value="1"/>
</dbReference>
<dbReference type="PROSITE" id="PS00486">
    <property type="entry name" value="DNA_MISMATCH_REPAIR_2"/>
    <property type="match status" value="1"/>
</dbReference>
<name>MUTS_RHOBA</name>
<sequence length="891" mass="97901">MTPMMRQYHEAKEACGDALLFFRMGDFYELFLDDAKVAAGILGLTLTSRDKDSENPTAMAGFPHHQLDQYLQKLIRAGFRAAVCEQVEDPKAAKGLVRREITRVVSAGTLTDEGLLDPKEPNYLAAVFAPSQKAREKAQKEAAKTNDPSGGDVVGIAWAELSSGRFEAGVFPRARLDDELARIGPAEVLHCEDDASVHPDPTATWSWTARPAWSYAAADAEKSLCKQLSVANLEGLGFEDNGDVAIRAAGAVLCYLKETQRGSLDHFRSLTCHNRSPVLQIDAATRRSLEITRTMRTGSREGALLGVIDRTVTPMGSRMLADHLAAPLIDADAITYRTDAVDEFVRNNNLRSDIRTVLGDTYDLTRLLARVATGRTGPRDLRQIAVTLSGLPALKARLAERDSACLTRLESELHLCPELREQLESALNDECPLSAADGNFIREGFDSELDTLRELARGGKRWIAEYQQRQMDETGIANLKVGYNRVFGYYLEVSNAHKDKIPADFIRKQTLKNCERYITPELKEYEEKVLAADEKASSREQMLFTLLRENTHKHLAILQEVANAIAMTDVVASLAEVAAQHHWVRPTLTDDSVLRIEGGRHPVLDVTMAQGEFVPNDCIQSPETGMILLITGPNMAGKSTYIRQVALITLLAQTGSFVPATSAEIGIADRIFARVGASDELSRGQSTFMVEMVETARILNTATSRSLVILDEIGRGTSTYDGLSLAWAITEHLHEQIGARTLFATHYHELAALQETLPRVANLSVAVKEWQDEVVFLHRIVPGSADKSYGIQVARLAGIPVEVNERAKDVLAQLEADHRDSLDRPTIAPPSGVNGKGSGDTYQLTLFGYADHPLIQEIETVDIDSMSPIQAWQFLQEAKAKLSAGPKAVKG</sequence>